<proteinExistence type="inferred from homology"/>
<dbReference type="EC" id="5.3.1.9" evidence="1"/>
<dbReference type="EMBL" id="AE017333">
    <property type="protein sequence ID" value="AAU42148.1"/>
    <property type="molecule type" value="Genomic_DNA"/>
</dbReference>
<dbReference type="EMBL" id="CP000002">
    <property type="protein sequence ID" value="AAU24783.1"/>
    <property type="molecule type" value="Genomic_DNA"/>
</dbReference>
<dbReference type="RefSeq" id="WP_003184785.1">
    <property type="nucleotide sequence ID" value="NC_006322.1"/>
</dbReference>
<dbReference type="SMR" id="Q65FL6"/>
<dbReference type="STRING" id="279010.BL02591"/>
<dbReference type="KEGG" id="bld:BLi03314"/>
<dbReference type="KEGG" id="bli:BL02591"/>
<dbReference type="eggNOG" id="COG0166">
    <property type="taxonomic scope" value="Bacteria"/>
</dbReference>
<dbReference type="HOGENOM" id="CLU_037303_0_1_9"/>
<dbReference type="UniPathway" id="UPA00109">
    <property type="reaction ID" value="UER00181"/>
</dbReference>
<dbReference type="UniPathway" id="UPA00138"/>
<dbReference type="Proteomes" id="UP000000606">
    <property type="component" value="Chromosome"/>
</dbReference>
<dbReference type="GO" id="GO:0005829">
    <property type="term" value="C:cytosol"/>
    <property type="evidence" value="ECO:0007669"/>
    <property type="project" value="TreeGrafter"/>
</dbReference>
<dbReference type="GO" id="GO:0097367">
    <property type="term" value="F:carbohydrate derivative binding"/>
    <property type="evidence" value="ECO:0007669"/>
    <property type="project" value="InterPro"/>
</dbReference>
<dbReference type="GO" id="GO:0004347">
    <property type="term" value="F:glucose-6-phosphate isomerase activity"/>
    <property type="evidence" value="ECO:0007669"/>
    <property type="project" value="UniProtKB-UniRule"/>
</dbReference>
<dbReference type="GO" id="GO:0048029">
    <property type="term" value="F:monosaccharide binding"/>
    <property type="evidence" value="ECO:0007669"/>
    <property type="project" value="TreeGrafter"/>
</dbReference>
<dbReference type="GO" id="GO:0006094">
    <property type="term" value="P:gluconeogenesis"/>
    <property type="evidence" value="ECO:0007669"/>
    <property type="project" value="UniProtKB-UniRule"/>
</dbReference>
<dbReference type="GO" id="GO:0051156">
    <property type="term" value="P:glucose 6-phosphate metabolic process"/>
    <property type="evidence" value="ECO:0007669"/>
    <property type="project" value="TreeGrafter"/>
</dbReference>
<dbReference type="GO" id="GO:0006096">
    <property type="term" value="P:glycolytic process"/>
    <property type="evidence" value="ECO:0007669"/>
    <property type="project" value="UniProtKB-UniRule"/>
</dbReference>
<dbReference type="CDD" id="cd05015">
    <property type="entry name" value="SIS_PGI_1"/>
    <property type="match status" value="1"/>
</dbReference>
<dbReference type="CDD" id="cd05016">
    <property type="entry name" value="SIS_PGI_2"/>
    <property type="match status" value="1"/>
</dbReference>
<dbReference type="FunFam" id="3.40.50.10490:FF:000015">
    <property type="entry name" value="Glucose-6-phosphate isomerase"/>
    <property type="match status" value="1"/>
</dbReference>
<dbReference type="FunFam" id="3.40.50.10490:FF:000016">
    <property type="entry name" value="Glucose-6-phosphate isomerase"/>
    <property type="match status" value="1"/>
</dbReference>
<dbReference type="FunFam" id="3.40.50.10490:FF:000020">
    <property type="entry name" value="Glucose-6-phosphate isomerase"/>
    <property type="match status" value="1"/>
</dbReference>
<dbReference type="Gene3D" id="3.40.50.10490">
    <property type="entry name" value="Glucose-6-phosphate isomerase like protein, domain 1"/>
    <property type="match status" value="3"/>
</dbReference>
<dbReference type="HAMAP" id="MF_00473">
    <property type="entry name" value="G6P_isomerase"/>
    <property type="match status" value="1"/>
</dbReference>
<dbReference type="InterPro" id="IPR001672">
    <property type="entry name" value="G6P_Isomerase"/>
</dbReference>
<dbReference type="InterPro" id="IPR018189">
    <property type="entry name" value="Phosphoglucose_isomerase_CS"/>
</dbReference>
<dbReference type="InterPro" id="IPR046348">
    <property type="entry name" value="SIS_dom_sf"/>
</dbReference>
<dbReference type="InterPro" id="IPR035476">
    <property type="entry name" value="SIS_PGI_1"/>
</dbReference>
<dbReference type="InterPro" id="IPR035482">
    <property type="entry name" value="SIS_PGI_2"/>
</dbReference>
<dbReference type="NCBIfam" id="NF010697">
    <property type="entry name" value="PRK14097.1"/>
    <property type="match status" value="1"/>
</dbReference>
<dbReference type="PANTHER" id="PTHR11469">
    <property type="entry name" value="GLUCOSE-6-PHOSPHATE ISOMERASE"/>
    <property type="match status" value="1"/>
</dbReference>
<dbReference type="PANTHER" id="PTHR11469:SF1">
    <property type="entry name" value="GLUCOSE-6-PHOSPHATE ISOMERASE"/>
    <property type="match status" value="1"/>
</dbReference>
<dbReference type="Pfam" id="PF00342">
    <property type="entry name" value="PGI"/>
    <property type="match status" value="2"/>
</dbReference>
<dbReference type="PRINTS" id="PR00662">
    <property type="entry name" value="G6PISOMERASE"/>
</dbReference>
<dbReference type="SUPFAM" id="SSF53697">
    <property type="entry name" value="SIS domain"/>
    <property type="match status" value="1"/>
</dbReference>
<dbReference type="PROSITE" id="PS00765">
    <property type="entry name" value="P_GLUCOSE_ISOMERASE_1"/>
    <property type="match status" value="1"/>
</dbReference>
<dbReference type="PROSITE" id="PS00174">
    <property type="entry name" value="P_GLUCOSE_ISOMERASE_2"/>
    <property type="match status" value="1"/>
</dbReference>
<dbReference type="PROSITE" id="PS51463">
    <property type="entry name" value="P_GLUCOSE_ISOMERASE_3"/>
    <property type="match status" value="1"/>
</dbReference>
<comment type="function">
    <text evidence="1">Catalyzes the reversible isomerization of glucose-6-phosphate to fructose-6-phosphate.</text>
</comment>
<comment type="catalytic activity">
    <reaction evidence="1">
        <text>alpha-D-glucose 6-phosphate = beta-D-fructose 6-phosphate</text>
        <dbReference type="Rhea" id="RHEA:11816"/>
        <dbReference type="ChEBI" id="CHEBI:57634"/>
        <dbReference type="ChEBI" id="CHEBI:58225"/>
        <dbReference type="EC" id="5.3.1.9"/>
    </reaction>
</comment>
<comment type="pathway">
    <text evidence="1">Carbohydrate biosynthesis; gluconeogenesis.</text>
</comment>
<comment type="pathway">
    <text evidence="1">Carbohydrate degradation; glycolysis; D-glyceraldehyde 3-phosphate and glycerone phosphate from D-glucose: step 2/4.</text>
</comment>
<comment type="subcellular location">
    <subcellularLocation>
        <location evidence="1">Cytoplasm</location>
    </subcellularLocation>
</comment>
<comment type="similarity">
    <text evidence="1">Belongs to the GPI family.</text>
</comment>
<sequence length="450" mass="50844">MTHVRFDYSRALPFFKEQELTYLRDFVKVAHHTIHEKTGAGSDFLGWVDLPTDYDKEEFARIKKCAEKIQNDSDVLLVVGIGGSYLGARAAIEMLNHSFYNVLPKEKRKTPQVIFIGNNISSSYMRDVMDLLEDADFSINVISKSGTTTEPAIAFRIFRKLLEEKYGKEEAKRRIYATTDKERGALKTLANEEGFESFIIPDDVGGRFSVLTAVGLLPIAVSGADIDEMMKGARDASKDFSTSELEDNPAYQYAVVRNVLYNKGKTIEMLINYEPGLQYFAEWWKQLFGESEGKDEKGIYPSSANFSTDLHSLGQYVQEGRRDMFETVLNVEKPRHELTIEEADNDLDGLNYLAGKTVDFVNKKAFQGTMLAHTDGNVPNLIVNVPEMNAYTFGYLVYFFEKACAMSGYLLGVNPFDQPGVEAYKVNMFALLGKPGFEEKKAELEKRLNQ</sequence>
<keyword id="KW-0963">Cytoplasm</keyword>
<keyword id="KW-0312">Gluconeogenesis</keyword>
<keyword id="KW-0324">Glycolysis</keyword>
<keyword id="KW-0413">Isomerase</keyword>
<keyword id="KW-0597">Phosphoprotein</keyword>
<keyword id="KW-1185">Reference proteome</keyword>
<gene>
    <name evidence="1" type="primary">pgi</name>
    <name type="ordered locus">BLi03314</name>
    <name type="ordered locus">BL02591</name>
</gene>
<evidence type="ECO:0000255" key="1">
    <source>
        <dbReference type="HAMAP-Rule" id="MF_00473"/>
    </source>
</evidence>
<organism>
    <name type="scientific">Bacillus licheniformis (strain ATCC 14580 / DSM 13 / JCM 2505 / CCUG 7422 / NBRC 12200 / NCIMB 9375 / NCTC 10341 / NRRL NRS-1264 / Gibson 46)</name>
    <dbReference type="NCBI Taxonomy" id="279010"/>
    <lineage>
        <taxon>Bacteria</taxon>
        <taxon>Bacillati</taxon>
        <taxon>Bacillota</taxon>
        <taxon>Bacilli</taxon>
        <taxon>Bacillales</taxon>
        <taxon>Bacillaceae</taxon>
        <taxon>Bacillus</taxon>
    </lineage>
</organism>
<accession>Q65FL6</accession>
<accession>Q62R27</accession>
<feature type="chain" id="PRO_0000180590" description="Glucose-6-phosphate isomerase">
    <location>
        <begin position="1"/>
        <end position="450"/>
    </location>
</feature>
<feature type="active site" description="Proton donor" evidence="1">
    <location>
        <position position="290"/>
    </location>
</feature>
<feature type="active site" evidence="1">
    <location>
        <position position="311"/>
    </location>
</feature>
<feature type="active site" evidence="1">
    <location>
        <position position="425"/>
    </location>
</feature>
<feature type="modified residue" description="Phosphothreonine" evidence="1">
    <location>
        <position position="38"/>
    </location>
</feature>
<reference key="1">
    <citation type="journal article" date="2004" name="J. Mol. Microbiol. Biotechnol.">
        <title>The complete genome sequence of Bacillus licheniformis DSM13, an organism with great industrial potential.</title>
        <authorList>
            <person name="Veith B."/>
            <person name="Herzberg C."/>
            <person name="Steckel S."/>
            <person name="Feesche J."/>
            <person name="Maurer K.H."/>
            <person name="Ehrenreich P."/>
            <person name="Baeumer S."/>
            <person name="Henne A."/>
            <person name="Liesegang H."/>
            <person name="Merkl R."/>
            <person name="Ehrenreich A."/>
            <person name="Gottschalk G."/>
        </authorList>
    </citation>
    <scope>NUCLEOTIDE SEQUENCE [LARGE SCALE GENOMIC DNA]</scope>
    <source>
        <strain>ATCC 14580 / DSM 13 / JCM 2505 / CCUG 7422 / NBRC 12200 / NCIMB 9375 / NCTC 10341 / NRRL NRS-1264 / Gibson 46</strain>
    </source>
</reference>
<reference key="2">
    <citation type="journal article" date="2004" name="Genome Biol.">
        <title>Complete genome sequence of the industrial bacterium Bacillus licheniformis and comparisons with closely related Bacillus species.</title>
        <authorList>
            <person name="Rey M.W."/>
            <person name="Ramaiya P."/>
            <person name="Nelson B.A."/>
            <person name="Brody-Karpin S.D."/>
            <person name="Zaretsky E.J."/>
            <person name="Tang M."/>
            <person name="Lopez de Leon A."/>
            <person name="Xiang H."/>
            <person name="Gusti V."/>
            <person name="Clausen I.G."/>
            <person name="Olsen P.B."/>
            <person name="Rasmussen M.D."/>
            <person name="Andersen J.T."/>
            <person name="Joergensen P.L."/>
            <person name="Larsen T.S."/>
            <person name="Sorokin A."/>
            <person name="Bolotin A."/>
            <person name="Lapidus A."/>
            <person name="Galleron N."/>
            <person name="Ehrlich S.D."/>
            <person name="Berka R.M."/>
        </authorList>
    </citation>
    <scope>NUCLEOTIDE SEQUENCE [LARGE SCALE GENOMIC DNA]</scope>
    <source>
        <strain>ATCC 14580 / DSM 13 / JCM 2505 / CCUG 7422 / NBRC 12200 / NCIMB 9375 / NCTC 10341 / NRRL NRS-1264 / Gibson 46</strain>
    </source>
</reference>
<name>G6PI_BACLD</name>
<protein>
    <recommendedName>
        <fullName evidence="1">Glucose-6-phosphate isomerase</fullName>
        <shortName evidence="1">GPI</shortName>
        <ecNumber evidence="1">5.3.1.9</ecNumber>
    </recommendedName>
    <alternativeName>
        <fullName evidence="1">Phosphoglucose isomerase</fullName>
        <shortName evidence="1">PGI</shortName>
    </alternativeName>
    <alternativeName>
        <fullName evidence="1">Phosphohexose isomerase</fullName>
        <shortName evidence="1">PHI</shortName>
    </alternativeName>
</protein>